<proteinExistence type="evidence at transcript level"/>
<comment type="function">
    <text evidence="1">Probable gustatory receptor which mediates acceptance or avoidance behavior, depending on its substrates.</text>
</comment>
<comment type="subcellular location">
    <subcellularLocation>
        <location evidence="1">Cell membrane</location>
        <topology evidence="1">Multi-pass membrane protein</topology>
    </subcellularLocation>
</comment>
<comment type="tissue specificity">
    <text evidence="3 4">Expressed in the adult abdomen and wing. In larvae, is expressed in neurons of the terminal external chemosensory organ.</text>
</comment>
<comment type="similarity">
    <text evidence="5">Belongs to the insect chemoreceptor superfamily. Gustatory receptor (GR) family. Gr10a subfamily.</text>
</comment>
<reference key="1">
    <citation type="journal article" date="2000" name="Science">
        <title>The genome sequence of Drosophila melanogaster.</title>
        <authorList>
            <person name="Adams M.D."/>
            <person name="Celniker S.E."/>
            <person name="Holt R.A."/>
            <person name="Evans C.A."/>
            <person name="Gocayne J.D."/>
            <person name="Amanatides P.G."/>
            <person name="Scherer S.E."/>
            <person name="Li P.W."/>
            <person name="Hoskins R.A."/>
            <person name="Galle R.F."/>
            <person name="George R.A."/>
            <person name="Lewis S.E."/>
            <person name="Richards S."/>
            <person name="Ashburner M."/>
            <person name="Henderson S.N."/>
            <person name="Sutton G.G."/>
            <person name="Wortman J.R."/>
            <person name="Yandell M.D."/>
            <person name="Zhang Q."/>
            <person name="Chen L.X."/>
            <person name="Brandon R.C."/>
            <person name="Rogers Y.-H.C."/>
            <person name="Blazej R.G."/>
            <person name="Champe M."/>
            <person name="Pfeiffer B.D."/>
            <person name="Wan K.H."/>
            <person name="Doyle C."/>
            <person name="Baxter E.G."/>
            <person name="Helt G."/>
            <person name="Nelson C.R."/>
            <person name="Miklos G.L.G."/>
            <person name="Abril J.F."/>
            <person name="Agbayani A."/>
            <person name="An H.-J."/>
            <person name="Andrews-Pfannkoch C."/>
            <person name="Baldwin D."/>
            <person name="Ballew R.M."/>
            <person name="Basu A."/>
            <person name="Baxendale J."/>
            <person name="Bayraktaroglu L."/>
            <person name="Beasley E.M."/>
            <person name="Beeson K.Y."/>
            <person name="Benos P.V."/>
            <person name="Berman B.P."/>
            <person name="Bhandari D."/>
            <person name="Bolshakov S."/>
            <person name="Borkova D."/>
            <person name="Botchan M.R."/>
            <person name="Bouck J."/>
            <person name="Brokstein P."/>
            <person name="Brottier P."/>
            <person name="Burtis K.C."/>
            <person name="Busam D.A."/>
            <person name="Butler H."/>
            <person name="Cadieu E."/>
            <person name="Center A."/>
            <person name="Chandra I."/>
            <person name="Cherry J.M."/>
            <person name="Cawley S."/>
            <person name="Dahlke C."/>
            <person name="Davenport L.B."/>
            <person name="Davies P."/>
            <person name="de Pablos B."/>
            <person name="Delcher A."/>
            <person name="Deng Z."/>
            <person name="Mays A.D."/>
            <person name="Dew I."/>
            <person name="Dietz S.M."/>
            <person name="Dodson K."/>
            <person name="Doup L.E."/>
            <person name="Downes M."/>
            <person name="Dugan-Rocha S."/>
            <person name="Dunkov B.C."/>
            <person name="Dunn P."/>
            <person name="Durbin K.J."/>
            <person name="Evangelista C.C."/>
            <person name="Ferraz C."/>
            <person name="Ferriera S."/>
            <person name="Fleischmann W."/>
            <person name="Fosler C."/>
            <person name="Gabrielian A.E."/>
            <person name="Garg N.S."/>
            <person name="Gelbart W.M."/>
            <person name="Glasser K."/>
            <person name="Glodek A."/>
            <person name="Gong F."/>
            <person name="Gorrell J.H."/>
            <person name="Gu Z."/>
            <person name="Guan P."/>
            <person name="Harris M."/>
            <person name="Harris N.L."/>
            <person name="Harvey D.A."/>
            <person name="Heiman T.J."/>
            <person name="Hernandez J.R."/>
            <person name="Houck J."/>
            <person name="Hostin D."/>
            <person name="Houston K.A."/>
            <person name="Howland T.J."/>
            <person name="Wei M.-H."/>
            <person name="Ibegwam C."/>
            <person name="Jalali M."/>
            <person name="Kalush F."/>
            <person name="Karpen G.H."/>
            <person name="Ke Z."/>
            <person name="Kennison J.A."/>
            <person name="Ketchum K.A."/>
            <person name="Kimmel B.E."/>
            <person name="Kodira C.D."/>
            <person name="Kraft C.L."/>
            <person name="Kravitz S."/>
            <person name="Kulp D."/>
            <person name="Lai Z."/>
            <person name="Lasko P."/>
            <person name="Lei Y."/>
            <person name="Levitsky A.A."/>
            <person name="Li J.H."/>
            <person name="Li Z."/>
            <person name="Liang Y."/>
            <person name="Lin X."/>
            <person name="Liu X."/>
            <person name="Mattei B."/>
            <person name="McIntosh T.C."/>
            <person name="McLeod M.P."/>
            <person name="McPherson D."/>
            <person name="Merkulov G."/>
            <person name="Milshina N.V."/>
            <person name="Mobarry C."/>
            <person name="Morris J."/>
            <person name="Moshrefi A."/>
            <person name="Mount S.M."/>
            <person name="Moy M."/>
            <person name="Murphy B."/>
            <person name="Murphy L."/>
            <person name="Muzny D.M."/>
            <person name="Nelson D.L."/>
            <person name="Nelson D.R."/>
            <person name="Nelson K.A."/>
            <person name="Nixon K."/>
            <person name="Nusskern D.R."/>
            <person name="Pacleb J.M."/>
            <person name="Palazzolo M."/>
            <person name="Pittman G.S."/>
            <person name="Pan S."/>
            <person name="Pollard J."/>
            <person name="Puri V."/>
            <person name="Reese M.G."/>
            <person name="Reinert K."/>
            <person name="Remington K."/>
            <person name="Saunders R.D.C."/>
            <person name="Scheeler F."/>
            <person name="Shen H."/>
            <person name="Shue B.C."/>
            <person name="Siden-Kiamos I."/>
            <person name="Simpson M."/>
            <person name="Skupski M.P."/>
            <person name="Smith T.J."/>
            <person name="Spier E."/>
            <person name="Spradling A.C."/>
            <person name="Stapleton M."/>
            <person name="Strong R."/>
            <person name="Sun E."/>
            <person name="Svirskas R."/>
            <person name="Tector C."/>
            <person name="Turner R."/>
            <person name="Venter E."/>
            <person name="Wang A.H."/>
            <person name="Wang X."/>
            <person name="Wang Z.-Y."/>
            <person name="Wassarman D.A."/>
            <person name="Weinstock G.M."/>
            <person name="Weissenbach J."/>
            <person name="Williams S.M."/>
            <person name="Woodage T."/>
            <person name="Worley K.C."/>
            <person name="Wu D."/>
            <person name="Yang S."/>
            <person name="Yao Q.A."/>
            <person name="Ye J."/>
            <person name="Yeh R.-F."/>
            <person name="Zaveri J.S."/>
            <person name="Zhan M."/>
            <person name="Zhang G."/>
            <person name="Zhao Q."/>
            <person name="Zheng L."/>
            <person name="Zheng X.H."/>
            <person name="Zhong F.N."/>
            <person name="Zhong W."/>
            <person name="Zhou X."/>
            <person name="Zhu S.C."/>
            <person name="Zhu X."/>
            <person name="Smith H.O."/>
            <person name="Gibbs R.A."/>
            <person name="Myers E.W."/>
            <person name="Rubin G.M."/>
            <person name="Venter J.C."/>
        </authorList>
    </citation>
    <scope>NUCLEOTIDE SEQUENCE [LARGE SCALE GENOMIC DNA]</scope>
    <source>
        <strain>Berkeley</strain>
    </source>
</reference>
<reference key="2">
    <citation type="journal article" date="2002" name="Genome Biol.">
        <title>Annotation of the Drosophila melanogaster euchromatic genome: a systematic review.</title>
        <authorList>
            <person name="Misra S."/>
            <person name="Crosby M.A."/>
            <person name="Mungall C.J."/>
            <person name="Matthews B.B."/>
            <person name="Campbell K.S."/>
            <person name="Hradecky P."/>
            <person name="Huang Y."/>
            <person name="Kaminker J.S."/>
            <person name="Millburn G.H."/>
            <person name="Prochnik S.E."/>
            <person name="Smith C.D."/>
            <person name="Tupy J.L."/>
            <person name="Whitfield E.J."/>
            <person name="Bayraktaroglu L."/>
            <person name="Berman B.P."/>
            <person name="Bettencourt B.R."/>
            <person name="Celniker S.E."/>
            <person name="de Grey A.D.N.J."/>
            <person name="Drysdale R.A."/>
            <person name="Harris N.L."/>
            <person name="Richter J."/>
            <person name="Russo S."/>
            <person name="Schroeder A.J."/>
            <person name="Shu S.Q."/>
            <person name="Stapleton M."/>
            <person name="Yamada C."/>
            <person name="Ashburner M."/>
            <person name="Gelbart W.M."/>
            <person name="Rubin G.M."/>
            <person name="Lewis S.E."/>
        </authorList>
    </citation>
    <scope>GENOME REANNOTATION</scope>
    <source>
        <strain>Berkeley</strain>
    </source>
</reference>
<reference key="3">
    <citation type="journal article" date="2000" name="Science">
        <title>Candidate taste receptors in Drosophila.</title>
        <authorList>
            <person name="Clyne P.J."/>
            <person name="Warr C.G."/>
            <person name="Carlson J.R."/>
        </authorList>
    </citation>
    <scope>IDENTIFICATION</scope>
    <scope>TISSUE SPECIFICITY</scope>
</reference>
<reference key="4">
    <citation type="journal article" date="2001" name="Curr. Biol.">
        <title>Spatially restricted expression of candidate taste receptors in the Drosophila gustatory system.</title>
        <authorList>
            <person name="Dunipace L."/>
            <person name="Meister S."/>
            <person name="McNealy C."/>
            <person name="Amrein H."/>
        </authorList>
    </citation>
    <scope>IDENTIFICATION</scope>
</reference>
<reference key="5">
    <citation type="journal article" date="2011" name="J. Neurosci.">
        <title>Molecular and cellular organization of the taste system in the Drosophila larva.</title>
        <authorList>
            <person name="Kwon J.Y."/>
            <person name="Dahanukar A."/>
            <person name="Weiss L.A."/>
            <person name="Carlson J.R."/>
        </authorList>
    </citation>
    <scope>TISSUE SPECIFICITY</scope>
</reference>
<protein>
    <recommendedName>
        <fullName>Putative gustatory receptor 59f</fullName>
    </recommendedName>
</protein>
<gene>
    <name type="primary">Gr59f</name>
    <name type="synonym">GR59E.1</name>
    <name type="ORF">CG33150</name>
</gene>
<keyword id="KW-1003">Cell membrane</keyword>
<keyword id="KW-0325">Glycoprotein</keyword>
<keyword id="KW-0472">Membrane</keyword>
<keyword id="KW-0675">Receptor</keyword>
<keyword id="KW-1185">Reference proteome</keyword>
<keyword id="KW-0807">Transducer</keyword>
<keyword id="KW-0812">Transmembrane</keyword>
<keyword id="KW-1133">Transmembrane helix</keyword>
<evidence type="ECO:0000250" key="1"/>
<evidence type="ECO:0000255" key="2"/>
<evidence type="ECO:0000269" key="3">
    <source>
    </source>
</evidence>
<evidence type="ECO:0000269" key="4">
    <source>
    </source>
</evidence>
<evidence type="ECO:0000305" key="5"/>
<accession>Q9W1N5</accession>
<dbReference type="EMBL" id="AE013599">
    <property type="protein sequence ID" value="AAF47022.3"/>
    <property type="molecule type" value="Genomic_DNA"/>
</dbReference>
<dbReference type="RefSeq" id="NP_788432.1">
    <property type="nucleotide sequence ID" value="NM_176252.1"/>
</dbReference>
<dbReference type="SMR" id="Q9W1N5"/>
<dbReference type="FunCoup" id="Q9W1N5">
    <property type="interactions" value="10"/>
</dbReference>
<dbReference type="IntAct" id="Q9W1N5">
    <property type="interactions" value="1"/>
</dbReference>
<dbReference type="STRING" id="7227.FBpp0071968"/>
<dbReference type="GlyCosmos" id="Q9W1N5">
    <property type="glycosylation" value="3 sites, No reported glycans"/>
</dbReference>
<dbReference type="GlyGen" id="Q9W1N5">
    <property type="glycosylation" value="3 sites"/>
</dbReference>
<dbReference type="PaxDb" id="7227-FBpp0071968"/>
<dbReference type="EnsemblMetazoa" id="FBtr0072059">
    <property type="protein sequence ID" value="FBpp0071968"/>
    <property type="gene ID" value="FBgn0041234"/>
</dbReference>
<dbReference type="GeneID" id="37726"/>
<dbReference type="KEGG" id="dme:Dmel_CG33150"/>
<dbReference type="AGR" id="FB:FBgn0041234"/>
<dbReference type="CTD" id="37726"/>
<dbReference type="FlyBase" id="FBgn0041234">
    <property type="gene designation" value="Gr59f"/>
</dbReference>
<dbReference type="VEuPathDB" id="VectorBase:FBgn0041234"/>
<dbReference type="eggNOG" id="KOG0867">
    <property type="taxonomic scope" value="Eukaryota"/>
</dbReference>
<dbReference type="HOGENOM" id="CLU_056071_0_0_1"/>
<dbReference type="InParanoid" id="Q9W1N5"/>
<dbReference type="OMA" id="QGIAWRQ"/>
<dbReference type="OrthoDB" id="6478931at2759"/>
<dbReference type="PhylomeDB" id="Q9W1N5"/>
<dbReference type="BioGRID-ORCS" id="37726">
    <property type="hits" value="0 hits in 1 CRISPR screen"/>
</dbReference>
<dbReference type="GenomeRNAi" id="37726"/>
<dbReference type="PRO" id="PR:Q9W1N5"/>
<dbReference type="Proteomes" id="UP000000803">
    <property type="component" value="Chromosome 2R"/>
</dbReference>
<dbReference type="Bgee" id="FBgn0041234">
    <property type="expression patterns" value="Expressed in adult Malpighian tubule principal cell of initial segment in Malpighian tubule and 2 other cell types or tissues"/>
</dbReference>
<dbReference type="GO" id="GO:0030424">
    <property type="term" value="C:axon"/>
    <property type="evidence" value="ECO:0000318"/>
    <property type="project" value="GO_Central"/>
</dbReference>
<dbReference type="GO" id="GO:0030425">
    <property type="term" value="C:dendrite"/>
    <property type="evidence" value="ECO:0000318"/>
    <property type="project" value="GO_Central"/>
</dbReference>
<dbReference type="GO" id="GO:0016020">
    <property type="term" value="C:membrane"/>
    <property type="evidence" value="ECO:0000303"/>
    <property type="project" value="UniProtKB"/>
</dbReference>
<dbReference type="GO" id="GO:0043025">
    <property type="term" value="C:neuronal cell body"/>
    <property type="evidence" value="ECO:0000318"/>
    <property type="project" value="GO_Central"/>
</dbReference>
<dbReference type="GO" id="GO:0005886">
    <property type="term" value="C:plasma membrane"/>
    <property type="evidence" value="ECO:0000250"/>
    <property type="project" value="FlyBase"/>
</dbReference>
<dbReference type="GO" id="GO:0015276">
    <property type="term" value="F:ligand-gated monoatomic ion channel activity"/>
    <property type="evidence" value="ECO:0000250"/>
    <property type="project" value="FlyBase"/>
</dbReference>
<dbReference type="GO" id="GO:0008527">
    <property type="term" value="F:taste receptor activity"/>
    <property type="evidence" value="ECO:0000303"/>
    <property type="project" value="UniProtKB"/>
</dbReference>
<dbReference type="GO" id="GO:0007635">
    <property type="term" value="P:chemosensory behavior"/>
    <property type="evidence" value="ECO:0000318"/>
    <property type="project" value="GO_Central"/>
</dbReference>
<dbReference type="GO" id="GO:0050912">
    <property type="term" value="P:detection of chemical stimulus involved in sensory perception of taste"/>
    <property type="evidence" value="ECO:0000303"/>
    <property type="project" value="UniProtKB"/>
</dbReference>
<dbReference type="GO" id="GO:0008049">
    <property type="term" value="P:male courtship behavior"/>
    <property type="evidence" value="ECO:0000318"/>
    <property type="project" value="GO_Central"/>
</dbReference>
<dbReference type="GO" id="GO:0034220">
    <property type="term" value="P:monoatomic ion transmembrane transport"/>
    <property type="evidence" value="ECO:0000250"/>
    <property type="project" value="FlyBase"/>
</dbReference>
<dbReference type="GO" id="GO:0007165">
    <property type="term" value="P:signal transduction"/>
    <property type="evidence" value="ECO:0007669"/>
    <property type="project" value="UniProtKB-KW"/>
</dbReference>
<dbReference type="InterPro" id="IPR013604">
    <property type="entry name" value="7TM_chemorcpt"/>
</dbReference>
<dbReference type="PANTHER" id="PTHR21143:SF123">
    <property type="entry name" value="GUSTATORY RECEPTOR FOR SUGAR TASTE 43A-RELATED"/>
    <property type="match status" value="1"/>
</dbReference>
<dbReference type="PANTHER" id="PTHR21143">
    <property type="entry name" value="INVERTEBRATE GUSTATORY RECEPTOR"/>
    <property type="match status" value="1"/>
</dbReference>
<dbReference type="Pfam" id="PF08395">
    <property type="entry name" value="7tm_7"/>
    <property type="match status" value="1"/>
</dbReference>
<name>GR59F_DROME</name>
<sequence length="406" mass="47559">MRSSATKGAKLKNSPRERLSSFNPQYAERYKELYRTLFWLLLISVLANTAPITILPGCPNRFYRLVHLSWMILWYGLFVLGSYWEFVLVTTQRVSLDRYLNAIESAIYVVHIFSIMLLTWQCRNWAPKLMTNIVTSDLNRAYTIDCNRTKRFIRLQLFLVGIFACLAIFFNIWTHKFVVYRSILSINSYVMPNIISSISFAQYYLLLQGIAWRQRRLTEGLERELTHLHSPRISEVQKIRMHHANLIDFTKAVNRTFQYSILLLFVGCFLNFNLVLFLVYQGIENPSMADFTKWVCMLLWLAMHVGKVCSILHFNQSIQNEHSTCLTLLSRVSYARKDIQDTITHFIIQMRTNVRQHVVCGVINLDLKFLTTLLVASADFFIFLLQYDVTYEALSKSVQGNVTRYK</sequence>
<organism>
    <name type="scientific">Drosophila melanogaster</name>
    <name type="common">Fruit fly</name>
    <dbReference type="NCBI Taxonomy" id="7227"/>
    <lineage>
        <taxon>Eukaryota</taxon>
        <taxon>Metazoa</taxon>
        <taxon>Ecdysozoa</taxon>
        <taxon>Arthropoda</taxon>
        <taxon>Hexapoda</taxon>
        <taxon>Insecta</taxon>
        <taxon>Pterygota</taxon>
        <taxon>Neoptera</taxon>
        <taxon>Endopterygota</taxon>
        <taxon>Diptera</taxon>
        <taxon>Brachycera</taxon>
        <taxon>Muscomorpha</taxon>
        <taxon>Ephydroidea</taxon>
        <taxon>Drosophilidae</taxon>
        <taxon>Drosophila</taxon>
        <taxon>Sophophora</taxon>
    </lineage>
</organism>
<feature type="chain" id="PRO_0000216525" description="Putative gustatory receptor 59f">
    <location>
        <begin position="1"/>
        <end position="406"/>
    </location>
</feature>
<feature type="topological domain" description="Cytoplasmic" evidence="1">
    <location>
        <begin position="1"/>
        <end position="36"/>
    </location>
</feature>
<feature type="transmembrane region" description="Helical; Name=1" evidence="2">
    <location>
        <begin position="37"/>
        <end position="57"/>
    </location>
</feature>
<feature type="topological domain" description="Extracellular" evidence="1">
    <location>
        <begin position="58"/>
        <end position="69"/>
    </location>
</feature>
<feature type="transmembrane region" description="Helical; Name=2" evidence="2">
    <location>
        <begin position="70"/>
        <end position="90"/>
    </location>
</feature>
<feature type="topological domain" description="Cytoplasmic" evidence="1">
    <location>
        <begin position="91"/>
        <end position="99"/>
    </location>
</feature>
<feature type="transmembrane region" description="Helical; Name=3" evidence="2">
    <location>
        <begin position="100"/>
        <end position="120"/>
    </location>
</feature>
<feature type="topological domain" description="Extracellular" evidence="1">
    <location>
        <begin position="121"/>
        <end position="154"/>
    </location>
</feature>
<feature type="transmembrane region" description="Helical; Name=4" evidence="2">
    <location>
        <begin position="155"/>
        <end position="175"/>
    </location>
</feature>
<feature type="topological domain" description="Cytoplasmic" evidence="1">
    <location>
        <begin position="176"/>
        <end position="189"/>
    </location>
</feature>
<feature type="transmembrane region" description="Helical; Name=5" evidence="2">
    <location>
        <begin position="190"/>
        <end position="210"/>
    </location>
</feature>
<feature type="topological domain" description="Extracellular" evidence="1">
    <location>
        <begin position="211"/>
        <end position="259"/>
    </location>
</feature>
<feature type="transmembrane region" description="Helical; Name=6" evidence="2">
    <location>
        <begin position="260"/>
        <end position="280"/>
    </location>
</feature>
<feature type="topological domain" description="Cytoplasmic" evidence="1">
    <location>
        <begin position="281"/>
        <end position="364"/>
    </location>
</feature>
<feature type="transmembrane region" description="Helical; Name=7" evidence="2">
    <location>
        <begin position="365"/>
        <end position="385"/>
    </location>
</feature>
<feature type="topological domain" description="Extracellular" evidence="1">
    <location>
        <begin position="386"/>
        <end position="406"/>
    </location>
</feature>
<feature type="glycosylation site" description="N-linked (GlcNAc...) asparagine" evidence="2">
    <location>
        <position position="147"/>
    </location>
</feature>
<feature type="glycosylation site" description="N-linked (GlcNAc...) asparagine" evidence="2">
    <location>
        <position position="254"/>
    </location>
</feature>
<feature type="glycosylation site" description="N-linked (GlcNAc...) asparagine" evidence="2">
    <location>
        <position position="401"/>
    </location>
</feature>